<proteinExistence type="inferred from homology"/>
<evidence type="ECO:0000255" key="1">
    <source>
        <dbReference type="HAMAP-Rule" id="MF_02006"/>
    </source>
</evidence>
<name>SYY_CLOK5</name>
<gene>
    <name evidence="1" type="primary">tyrS</name>
    <name type="ordered locus">CKL_0758</name>
</gene>
<dbReference type="EC" id="6.1.1.1" evidence="1"/>
<dbReference type="EMBL" id="CP000673">
    <property type="protein sequence ID" value="EDK32811.1"/>
    <property type="molecule type" value="Genomic_DNA"/>
</dbReference>
<dbReference type="RefSeq" id="WP_011989326.1">
    <property type="nucleotide sequence ID" value="NC_009706.1"/>
</dbReference>
<dbReference type="SMR" id="A5N680"/>
<dbReference type="STRING" id="431943.CKL_0758"/>
<dbReference type="KEGG" id="ckl:CKL_0758"/>
<dbReference type="eggNOG" id="COG0162">
    <property type="taxonomic scope" value="Bacteria"/>
</dbReference>
<dbReference type="HOGENOM" id="CLU_024003_0_3_9"/>
<dbReference type="Proteomes" id="UP000002411">
    <property type="component" value="Chromosome"/>
</dbReference>
<dbReference type="GO" id="GO:0005829">
    <property type="term" value="C:cytosol"/>
    <property type="evidence" value="ECO:0007669"/>
    <property type="project" value="TreeGrafter"/>
</dbReference>
<dbReference type="GO" id="GO:0005524">
    <property type="term" value="F:ATP binding"/>
    <property type="evidence" value="ECO:0007669"/>
    <property type="project" value="UniProtKB-UniRule"/>
</dbReference>
<dbReference type="GO" id="GO:0003723">
    <property type="term" value="F:RNA binding"/>
    <property type="evidence" value="ECO:0007669"/>
    <property type="project" value="UniProtKB-KW"/>
</dbReference>
<dbReference type="GO" id="GO:0004831">
    <property type="term" value="F:tyrosine-tRNA ligase activity"/>
    <property type="evidence" value="ECO:0007669"/>
    <property type="project" value="UniProtKB-UniRule"/>
</dbReference>
<dbReference type="GO" id="GO:0006437">
    <property type="term" value="P:tyrosyl-tRNA aminoacylation"/>
    <property type="evidence" value="ECO:0007669"/>
    <property type="project" value="UniProtKB-UniRule"/>
</dbReference>
<dbReference type="CDD" id="cd00165">
    <property type="entry name" value="S4"/>
    <property type="match status" value="1"/>
</dbReference>
<dbReference type="CDD" id="cd00805">
    <property type="entry name" value="TyrRS_core"/>
    <property type="match status" value="1"/>
</dbReference>
<dbReference type="FunFam" id="1.10.240.10:FF:000001">
    <property type="entry name" value="Tyrosine--tRNA ligase"/>
    <property type="match status" value="1"/>
</dbReference>
<dbReference type="FunFam" id="3.10.290.10:FF:000022">
    <property type="entry name" value="Tyrosine--tRNA ligase"/>
    <property type="match status" value="1"/>
</dbReference>
<dbReference type="FunFam" id="3.40.50.620:FF:000008">
    <property type="entry name" value="Tyrosine--tRNA ligase"/>
    <property type="match status" value="1"/>
</dbReference>
<dbReference type="Gene3D" id="3.40.50.620">
    <property type="entry name" value="HUPs"/>
    <property type="match status" value="1"/>
</dbReference>
<dbReference type="Gene3D" id="3.10.290.10">
    <property type="entry name" value="RNA-binding S4 domain"/>
    <property type="match status" value="1"/>
</dbReference>
<dbReference type="Gene3D" id="1.10.240.10">
    <property type="entry name" value="Tyrosyl-Transfer RNA Synthetase"/>
    <property type="match status" value="1"/>
</dbReference>
<dbReference type="HAMAP" id="MF_02006">
    <property type="entry name" value="Tyr_tRNA_synth_type1"/>
    <property type="match status" value="1"/>
</dbReference>
<dbReference type="InterPro" id="IPR001412">
    <property type="entry name" value="aa-tRNA-synth_I_CS"/>
</dbReference>
<dbReference type="InterPro" id="IPR002305">
    <property type="entry name" value="aa-tRNA-synth_Ic"/>
</dbReference>
<dbReference type="InterPro" id="IPR014729">
    <property type="entry name" value="Rossmann-like_a/b/a_fold"/>
</dbReference>
<dbReference type="InterPro" id="IPR002942">
    <property type="entry name" value="S4_RNA-bd"/>
</dbReference>
<dbReference type="InterPro" id="IPR036986">
    <property type="entry name" value="S4_RNA-bd_sf"/>
</dbReference>
<dbReference type="InterPro" id="IPR054608">
    <property type="entry name" value="SYY-like_C"/>
</dbReference>
<dbReference type="InterPro" id="IPR002307">
    <property type="entry name" value="Tyr-tRNA-ligase"/>
</dbReference>
<dbReference type="InterPro" id="IPR024088">
    <property type="entry name" value="Tyr-tRNA-ligase_bac-type"/>
</dbReference>
<dbReference type="InterPro" id="IPR024107">
    <property type="entry name" value="Tyr-tRNA-ligase_bac_1"/>
</dbReference>
<dbReference type="NCBIfam" id="TIGR00234">
    <property type="entry name" value="tyrS"/>
    <property type="match status" value="1"/>
</dbReference>
<dbReference type="PANTHER" id="PTHR11766:SF0">
    <property type="entry name" value="TYROSINE--TRNA LIGASE, MITOCHONDRIAL"/>
    <property type="match status" value="1"/>
</dbReference>
<dbReference type="PANTHER" id="PTHR11766">
    <property type="entry name" value="TYROSYL-TRNA SYNTHETASE"/>
    <property type="match status" value="1"/>
</dbReference>
<dbReference type="Pfam" id="PF22421">
    <property type="entry name" value="SYY_C-terminal"/>
    <property type="match status" value="1"/>
</dbReference>
<dbReference type="Pfam" id="PF00579">
    <property type="entry name" value="tRNA-synt_1b"/>
    <property type="match status" value="1"/>
</dbReference>
<dbReference type="PRINTS" id="PR01040">
    <property type="entry name" value="TRNASYNTHTYR"/>
</dbReference>
<dbReference type="SMART" id="SM00363">
    <property type="entry name" value="S4"/>
    <property type="match status" value="1"/>
</dbReference>
<dbReference type="SUPFAM" id="SSF55174">
    <property type="entry name" value="Alpha-L RNA-binding motif"/>
    <property type="match status" value="1"/>
</dbReference>
<dbReference type="SUPFAM" id="SSF52374">
    <property type="entry name" value="Nucleotidylyl transferase"/>
    <property type="match status" value="1"/>
</dbReference>
<dbReference type="PROSITE" id="PS00178">
    <property type="entry name" value="AA_TRNA_LIGASE_I"/>
    <property type="match status" value="1"/>
</dbReference>
<dbReference type="PROSITE" id="PS50889">
    <property type="entry name" value="S4"/>
    <property type="match status" value="1"/>
</dbReference>
<keyword id="KW-0030">Aminoacyl-tRNA synthetase</keyword>
<keyword id="KW-0067">ATP-binding</keyword>
<keyword id="KW-0963">Cytoplasm</keyword>
<keyword id="KW-0436">Ligase</keyword>
<keyword id="KW-0547">Nucleotide-binding</keyword>
<keyword id="KW-0648">Protein biosynthesis</keyword>
<keyword id="KW-1185">Reference proteome</keyword>
<keyword id="KW-0694">RNA-binding</keyword>
<sequence length="406" mass="46383">MANVYDILLERGYIKQITHEDEVRELLGKEKVTFYIGFDPTADSLHIGHFLQMMVMSHMQKAGHKPIALLGGGTAMIGDPTGKTDMRKMLSREQIQHNADCFKKQFSKFIDFEDEKAIMANNADWLMNLNYVNFLREIGVHFSVNKMLTAECFKQRMEKGLTFLEFNYMLMQGYDFLELNRRYGCTFQMGGDDQWANIIAGVNLIRKKERKPAFGMTFTLLTKSDGKKMGKTEGGAIWLDKEKTSPYDFYQYWRNVDDADVEKCLLLLTFLPMDEVKRLSSLPGEKINEAKKVLAYEVTKIIHGEKEAQMAKEAAEALFSGGESLNNVPTIELDESSLGCSVVELLVDIHILPSKSEARRLIKQNGLTINGEKVTDSELKVTKDHFKNGELLIRRGKKNYNRIIIK</sequence>
<feature type="chain" id="PRO_1000189281" description="Tyrosine--tRNA ligase">
    <location>
        <begin position="1"/>
        <end position="406"/>
    </location>
</feature>
<feature type="domain" description="S4 RNA-binding" evidence="1">
    <location>
        <begin position="340"/>
        <end position="406"/>
    </location>
</feature>
<feature type="short sequence motif" description="'HIGH' region">
    <location>
        <begin position="40"/>
        <end position="49"/>
    </location>
</feature>
<feature type="short sequence motif" description="'KMSKS' region">
    <location>
        <begin position="228"/>
        <end position="232"/>
    </location>
</feature>
<feature type="binding site" evidence="1">
    <location>
        <position position="35"/>
    </location>
    <ligand>
        <name>L-tyrosine</name>
        <dbReference type="ChEBI" id="CHEBI:58315"/>
    </ligand>
</feature>
<feature type="binding site" evidence="1">
    <location>
        <position position="168"/>
    </location>
    <ligand>
        <name>L-tyrosine</name>
        <dbReference type="ChEBI" id="CHEBI:58315"/>
    </ligand>
</feature>
<feature type="binding site" evidence="1">
    <location>
        <position position="172"/>
    </location>
    <ligand>
        <name>L-tyrosine</name>
        <dbReference type="ChEBI" id="CHEBI:58315"/>
    </ligand>
</feature>
<feature type="binding site" evidence="1">
    <location>
        <position position="231"/>
    </location>
    <ligand>
        <name>ATP</name>
        <dbReference type="ChEBI" id="CHEBI:30616"/>
    </ligand>
</feature>
<organism>
    <name type="scientific">Clostridium kluyveri (strain ATCC 8527 / DSM 555 / NBRC 12016 / NCIMB 10680 / K1)</name>
    <dbReference type="NCBI Taxonomy" id="431943"/>
    <lineage>
        <taxon>Bacteria</taxon>
        <taxon>Bacillati</taxon>
        <taxon>Bacillota</taxon>
        <taxon>Clostridia</taxon>
        <taxon>Eubacteriales</taxon>
        <taxon>Clostridiaceae</taxon>
        <taxon>Clostridium</taxon>
    </lineage>
</organism>
<comment type="function">
    <text evidence="1">Catalyzes the attachment of tyrosine to tRNA(Tyr) in a two-step reaction: tyrosine is first activated by ATP to form Tyr-AMP and then transferred to the acceptor end of tRNA(Tyr).</text>
</comment>
<comment type="catalytic activity">
    <reaction evidence="1">
        <text>tRNA(Tyr) + L-tyrosine + ATP = L-tyrosyl-tRNA(Tyr) + AMP + diphosphate + H(+)</text>
        <dbReference type="Rhea" id="RHEA:10220"/>
        <dbReference type="Rhea" id="RHEA-COMP:9706"/>
        <dbReference type="Rhea" id="RHEA-COMP:9707"/>
        <dbReference type="ChEBI" id="CHEBI:15378"/>
        <dbReference type="ChEBI" id="CHEBI:30616"/>
        <dbReference type="ChEBI" id="CHEBI:33019"/>
        <dbReference type="ChEBI" id="CHEBI:58315"/>
        <dbReference type="ChEBI" id="CHEBI:78442"/>
        <dbReference type="ChEBI" id="CHEBI:78536"/>
        <dbReference type="ChEBI" id="CHEBI:456215"/>
        <dbReference type="EC" id="6.1.1.1"/>
    </reaction>
</comment>
<comment type="subunit">
    <text evidence="1">Homodimer.</text>
</comment>
<comment type="subcellular location">
    <subcellularLocation>
        <location evidence="1">Cytoplasm</location>
    </subcellularLocation>
</comment>
<comment type="similarity">
    <text evidence="1">Belongs to the class-I aminoacyl-tRNA synthetase family. TyrS type 1 subfamily.</text>
</comment>
<accession>A5N680</accession>
<reference key="1">
    <citation type="journal article" date="2008" name="Proc. Natl. Acad. Sci. U.S.A.">
        <title>The genome of Clostridium kluyveri, a strict anaerobe with unique metabolic features.</title>
        <authorList>
            <person name="Seedorf H."/>
            <person name="Fricke W.F."/>
            <person name="Veith B."/>
            <person name="Brueggemann H."/>
            <person name="Liesegang H."/>
            <person name="Strittmatter A."/>
            <person name="Miethke M."/>
            <person name="Buckel W."/>
            <person name="Hinderberger J."/>
            <person name="Li F."/>
            <person name="Hagemeier C."/>
            <person name="Thauer R.K."/>
            <person name="Gottschalk G."/>
        </authorList>
    </citation>
    <scope>NUCLEOTIDE SEQUENCE [LARGE SCALE GENOMIC DNA]</scope>
    <source>
        <strain>ATCC 8527 / DSM 555 / NBRC 12016 / NCIMB 10680 / K1</strain>
    </source>
</reference>
<protein>
    <recommendedName>
        <fullName evidence="1">Tyrosine--tRNA ligase</fullName>
        <ecNumber evidence="1">6.1.1.1</ecNumber>
    </recommendedName>
    <alternativeName>
        <fullName evidence="1">Tyrosyl-tRNA synthetase</fullName>
        <shortName evidence="1">TyrRS</shortName>
    </alternativeName>
</protein>